<protein>
    <recommendedName>
        <fullName evidence="1">Glyoxylate/hydroxypyruvate reductase B</fullName>
        <ecNumber evidence="1">1.1.1.79</ecNumber>
        <ecNumber evidence="1">1.1.1.81</ecNumber>
    </recommendedName>
</protein>
<comment type="function">
    <text evidence="1">Catalyzes the NADPH-dependent reduction of glyoxylate and hydroxypyruvate into glycolate and glycerate, respectively.</text>
</comment>
<comment type="catalytic activity">
    <reaction evidence="1">
        <text>glycolate + NADP(+) = glyoxylate + NADPH + H(+)</text>
        <dbReference type="Rhea" id="RHEA:10992"/>
        <dbReference type="ChEBI" id="CHEBI:15378"/>
        <dbReference type="ChEBI" id="CHEBI:29805"/>
        <dbReference type="ChEBI" id="CHEBI:36655"/>
        <dbReference type="ChEBI" id="CHEBI:57783"/>
        <dbReference type="ChEBI" id="CHEBI:58349"/>
        <dbReference type="EC" id="1.1.1.79"/>
    </reaction>
</comment>
<comment type="catalytic activity">
    <reaction evidence="1">
        <text>(R)-glycerate + NAD(+) = 3-hydroxypyruvate + NADH + H(+)</text>
        <dbReference type="Rhea" id="RHEA:17905"/>
        <dbReference type="ChEBI" id="CHEBI:15378"/>
        <dbReference type="ChEBI" id="CHEBI:16659"/>
        <dbReference type="ChEBI" id="CHEBI:17180"/>
        <dbReference type="ChEBI" id="CHEBI:57540"/>
        <dbReference type="ChEBI" id="CHEBI:57945"/>
        <dbReference type="EC" id="1.1.1.81"/>
    </reaction>
</comment>
<comment type="catalytic activity">
    <reaction evidence="1">
        <text>(R)-glycerate + NADP(+) = 3-hydroxypyruvate + NADPH + H(+)</text>
        <dbReference type="Rhea" id="RHEA:18657"/>
        <dbReference type="ChEBI" id="CHEBI:15378"/>
        <dbReference type="ChEBI" id="CHEBI:16659"/>
        <dbReference type="ChEBI" id="CHEBI:17180"/>
        <dbReference type="ChEBI" id="CHEBI:57783"/>
        <dbReference type="ChEBI" id="CHEBI:58349"/>
        <dbReference type="EC" id="1.1.1.81"/>
    </reaction>
</comment>
<comment type="subunit">
    <text evidence="1">Homodimer.</text>
</comment>
<comment type="subcellular location">
    <subcellularLocation>
        <location evidence="1">Cytoplasm</location>
    </subcellularLocation>
</comment>
<comment type="similarity">
    <text evidence="1">Belongs to the D-isomer specific 2-hydroxyacid dehydrogenase family. GhrB subfamily.</text>
</comment>
<name>GHRB_CITK8</name>
<gene>
    <name evidence="1" type="primary">ghrB</name>
    <name type="ordered locus">CKO_05009</name>
</gene>
<keyword id="KW-0963">Cytoplasm</keyword>
<keyword id="KW-0520">NAD</keyword>
<keyword id="KW-0521">NADP</keyword>
<keyword id="KW-0560">Oxidoreductase</keyword>
<keyword id="KW-1185">Reference proteome</keyword>
<feature type="chain" id="PRO_0000348379" description="Glyoxylate/hydroxypyruvate reductase B">
    <location>
        <begin position="1"/>
        <end position="324"/>
    </location>
</feature>
<feature type="active site" evidence="1">
    <location>
        <position position="237"/>
    </location>
</feature>
<feature type="active site" evidence="1">
    <location>
        <position position="266"/>
    </location>
</feature>
<feature type="active site" description="Proton donor" evidence="1">
    <location>
        <position position="285"/>
    </location>
</feature>
<reference key="1">
    <citation type="submission" date="2007-08" db="EMBL/GenBank/DDBJ databases">
        <authorList>
            <consortium name="The Citrobacter koseri Genome Sequencing Project"/>
            <person name="McClelland M."/>
            <person name="Sanderson E.K."/>
            <person name="Porwollik S."/>
            <person name="Spieth J."/>
            <person name="Clifton W.S."/>
            <person name="Latreille P."/>
            <person name="Courtney L."/>
            <person name="Wang C."/>
            <person name="Pepin K."/>
            <person name="Bhonagiri V."/>
            <person name="Nash W."/>
            <person name="Johnson M."/>
            <person name="Thiruvilangam P."/>
            <person name="Wilson R."/>
        </authorList>
    </citation>
    <scope>NUCLEOTIDE SEQUENCE [LARGE SCALE GENOMIC DNA]</scope>
    <source>
        <strain>ATCC BAA-895 / CDC 4225-83 / SGSC4696</strain>
    </source>
</reference>
<evidence type="ECO:0000255" key="1">
    <source>
        <dbReference type="HAMAP-Rule" id="MF_01667"/>
    </source>
</evidence>
<proteinExistence type="inferred from homology"/>
<organism>
    <name type="scientific">Citrobacter koseri (strain ATCC BAA-895 / CDC 4225-83 / SGSC4696)</name>
    <dbReference type="NCBI Taxonomy" id="290338"/>
    <lineage>
        <taxon>Bacteria</taxon>
        <taxon>Pseudomonadati</taxon>
        <taxon>Pseudomonadota</taxon>
        <taxon>Gammaproteobacteria</taxon>
        <taxon>Enterobacterales</taxon>
        <taxon>Enterobacteriaceae</taxon>
        <taxon>Citrobacter</taxon>
    </lineage>
</organism>
<sequence>MKPSIILYKALPDDLLHRLEEHFTVTQVPNLRPETVEQHAQAFASAEGLLGSSETVNSALLEKMPKLRAASTVSVGYDNFDVAALNARSVLLMHTPTVLTETVADTVMALVLSTARRVVEVAERVKVGEWTKSIGPDWFGTDVHHKTLGIVGMGRIGLALAQRAHFGFNMPILYNARRHHPEAEERFNARYCDLDTLLQAADFVCLILPLTEETHHLFGAAQFAKMKSSAIFINAGRGPVVDETALIAALQSGEIHAAGLDVFEQEPLPVDSPLLSLPNVVALPHIGSATHETRYNMAACAVDNLIDALQGKVEKNCVNPQVAG</sequence>
<accession>A8ARD9</accession>
<dbReference type="EC" id="1.1.1.79" evidence="1"/>
<dbReference type="EC" id="1.1.1.81" evidence="1"/>
<dbReference type="EMBL" id="CP000822">
    <property type="protein sequence ID" value="ABV16052.1"/>
    <property type="molecule type" value="Genomic_DNA"/>
</dbReference>
<dbReference type="RefSeq" id="WP_012135692.1">
    <property type="nucleotide sequence ID" value="NC_009792.1"/>
</dbReference>
<dbReference type="SMR" id="A8ARD9"/>
<dbReference type="STRING" id="290338.CKO_05009"/>
<dbReference type="GeneID" id="45138475"/>
<dbReference type="KEGG" id="cko:CKO_05009"/>
<dbReference type="HOGENOM" id="CLU_019796_1_2_6"/>
<dbReference type="OrthoDB" id="9805416at2"/>
<dbReference type="Proteomes" id="UP000008148">
    <property type="component" value="Chromosome"/>
</dbReference>
<dbReference type="GO" id="GO:0005829">
    <property type="term" value="C:cytosol"/>
    <property type="evidence" value="ECO:0007669"/>
    <property type="project" value="TreeGrafter"/>
</dbReference>
<dbReference type="GO" id="GO:0005886">
    <property type="term" value="C:plasma membrane"/>
    <property type="evidence" value="ECO:0007669"/>
    <property type="project" value="UniProtKB-UniRule"/>
</dbReference>
<dbReference type="GO" id="GO:0030267">
    <property type="term" value="F:glyoxylate reductase (NADPH) activity"/>
    <property type="evidence" value="ECO:0007669"/>
    <property type="project" value="UniProtKB-UniRule"/>
</dbReference>
<dbReference type="GO" id="GO:0008465">
    <property type="term" value="F:hydroxypyruvate reductase (NADH) activity"/>
    <property type="evidence" value="ECO:0007669"/>
    <property type="project" value="RHEA"/>
</dbReference>
<dbReference type="GO" id="GO:0120509">
    <property type="term" value="F:hydroxypyruvate reductase (NADPH) activity"/>
    <property type="evidence" value="ECO:0007669"/>
    <property type="project" value="RHEA"/>
</dbReference>
<dbReference type="GO" id="GO:0051287">
    <property type="term" value="F:NAD binding"/>
    <property type="evidence" value="ECO:0007669"/>
    <property type="project" value="InterPro"/>
</dbReference>
<dbReference type="CDD" id="cd05301">
    <property type="entry name" value="GDH"/>
    <property type="match status" value="1"/>
</dbReference>
<dbReference type="FunFam" id="3.40.50.720:FF:000026">
    <property type="entry name" value="Glyoxylate/hydroxypyruvate reductase B"/>
    <property type="match status" value="1"/>
</dbReference>
<dbReference type="Gene3D" id="3.40.50.720">
    <property type="entry name" value="NAD(P)-binding Rossmann-like Domain"/>
    <property type="match status" value="2"/>
</dbReference>
<dbReference type="HAMAP" id="MF_01667">
    <property type="entry name" value="2_Hacid_dh_C_GhrB"/>
    <property type="match status" value="1"/>
</dbReference>
<dbReference type="InterPro" id="IPR050223">
    <property type="entry name" value="D-isomer_2-hydroxyacid_DH"/>
</dbReference>
<dbReference type="InterPro" id="IPR006139">
    <property type="entry name" value="D-isomer_2_OHA_DH_cat_dom"/>
</dbReference>
<dbReference type="InterPro" id="IPR029753">
    <property type="entry name" value="D-isomer_DH_CS"/>
</dbReference>
<dbReference type="InterPro" id="IPR006140">
    <property type="entry name" value="D-isomer_DH_NAD-bd"/>
</dbReference>
<dbReference type="InterPro" id="IPR023756">
    <property type="entry name" value="Glyo/OHPyrv_Rdtase_B"/>
</dbReference>
<dbReference type="InterPro" id="IPR036291">
    <property type="entry name" value="NAD(P)-bd_dom_sf"/>
</dbReference>
<dbReference type="NCBIfam" id="NF011938">
    <property type="entry name" value="PRK15409.1"/>
    <property type="match status" value="1"/>
</dbReference>
<dbReference type="PANTHER" id="PTHR10996">
    <property type="entry name" value="2-HYDROXYACID DEHYDROGENASE-RELATED"/>
    <property type="match status" value="1"/>
</dbReference>
<dbReference type="PANTHER" id="PTHR10996:SF283">
    <property type="entry name" value="GLYOXYLATE_HYDROXYPYRUVATE REDUCTASE B"/>
    <property type="match status" value="1"/>
</dbReference>
<dbReference type="Pfam" id="PF00389">
    <property type="entry name" value="2-Hacid_dh"/>
    <property type="match status" value="1"/>
</dbReference>
<dbReference type="Pfam" id="PF02826">
    <property type="entry name" value="2-Hacid_dh_C"/>
    <property type="match status" value="1"/>
</dbReference>
<dbReference type="SUPFAM" id="SSF52283">
    <property type="entry name" value="Formate/glycerate dehydrogenase catalytic domain-like"/>
    <property type="match status" value="1"/>
</dbReference>
<dbReference type="SUPFAM" id="SSF51735">
    <property type="entry name" value="NAD(P)-binding Rossmann-fold domains"/>
    <property type="match status" value="1"/>
</dbReference>
<dbReference type="PROSITE" id="PS00670">
    <property type="entry name" value="D_2_HYDROXYACID_DH_2"/>
    <property type="match status" value="1"/>
</dbReference>
<dbReference type="PROSITE" id="PS00671">
    <property type="entry name" value="D_2_HYDROXYACID_DH_3"/>
    <property type="match status" value="1"/>
</dbReference>